<proteinExistence type="evidence at transcript level"/>
<gene>
    <name type="primary">stk4</name>
</gene>
<protein>
    <recommendedName>
        <fullName>Serine/threonine-protein kinase 4</fullName>
        <ecNumber>2.7.11.1</ecNumber>
    </recommendedName>
    <component>
        <recommendedName>
            <fullName>Serine/threonine-protein kinase 4 37kDa subunit</fullName>
            <shortName>MST1/N</shortName>
        </recommendedName>
    </component>
    <component>
        <recommendedName>
            <fullName>Serine/threonine-protein kinase 4 18kDa subunit</fullName>
            <shortName>MST1/C</shortName>
        </recommendedName>
    </component>
</protein>
<organism>
    <name type="scientific">Xenopus laevis</name>
    <name type="common">African clawed frog</name>
    <dbReference type="NCBI Taxonomy" id="8355"/>
    <lineage>
        <taxon>Eukaryota</taxon>
        <taxon>Metazoa</taxon>
        <taxon>Chordata</taxon>
        <taxon>Craniata</taxon>
        <taxon>Vertebrata</taxon>
        <taxon>Euteleostomi</taxon>
        <taxon>Amphibia</taxon>
        <taxon>Batrachia</taxon>
        <taxon>Anura</taxon>
        <taxon>Pipoidea</taxon>
        <taxon>Pipidae</taxon>
        <taxon>Xenopodinae</taxon>
        <taxon>Xenopus</taxon>
        <taxon>Xenopus</taxon>
    </lineage>
</organism>
<dbReference type="EC" id="2.7.11.1"/>
<dbReference type="EMBL" id="BC060493">
    <property type="protein sequence ID" value="AAH60493.1"/>
    <property type="molecule type" value="mRNA"/>
</dbReference>
<dbReference type="RefSeq" id="NP_001083437.1">
    <property type="nucleotide sequence ID" value="NM_001089968.1"/>
</dbReference>
<dbReference type="SMR" id="Q6PA14"/>
<dbReference type="DNASU" id="398925"/>
<dbReference type="GeneID" id="398925"/>
<dbReference type="KEGG" id="xla:398925"/>
<dbReference type="AGR" id="Xenbase:XB-GENE-955926"/>
<dbReference type="CTD" id="398925"/>
<dbReference type="Xenbase" id="XB-GENE-955926">
    <property type="gene designation" value="stk4.S"/>
</dbReference>
<dbReference type="OrthoDB" id="8693905at2759"/>
<dbReference type="Proteomes" id="UP000186698">
    <property type="component" value="Chromosome 9_10S"/>
</dbReference>
<dbReference type="Bgee" id="398925">
    <property type="expression patterns" value="Expressed in spleen and 14 other cell types or tissues"/>
</dbReference>
<dbReference type="GO" id="GO:0005737">
    <property type="term" value="C:cytoplasm"/>
    <property type="evidence" value="ECO:0000250"/>
    <property type="project" value="UniProtKB"/>
</dbReference>
<dbReference type="GO" id="GO:0005634">
    <property type="term" value="C:nucleus"/>
    <property type="evidence" value="ECO:0000250"/>
    <property type="project" value="UniProtKB"/>
</dbReference>
<dbReference type="GO" id="GO:0005524">
    <property type="term" value="F:ATP binding"/>
    <property type="evidence" value="ECO:0007669"/>
    <property type="project" value="UniProtKB-KW"/>
</dbReference>
<dbReference type="GO" id="GO:0046872">
    <property type="term" value="F:metal ion binding"/>
    <property type="evidence" value="ECO:0007669"/>
    <property type="project" value="UniProtKB-KW"/>
</dbReference>
<dbReference type="GO" id="GO:0106310">
    <property type="term" value="F:protein serine kinase activity"/>
    <property type="evidence" value="ECO:0007669"/>
    <property type="project" value="RHEA"/>
</dbReference>
<dbReference type="GO" id="GO:0004674">
    <property type="term" value="F:protein serine/threonine kinase activity"/>
    <property type="evidence" value="ECO:0000250"/>
    <property type="project" value="UniProtKB"/>
</dbReference>
<dbReference type="GO" id="GO:0006915">
    <property type="term" value="P:apoptotic process"/>
    <property type="evidence" value="ECO:0000250"/>
    <property type="project" value="UniProtKB"/>
</dbReference>
<dbReference type="GO" id="GO:0035329">
    <property type="term" value="P:hippo signaling"/>
    <property type="evidence" value="ECO:0000250"/>
    <property type="project" value="UniProtKB"/>
</dbReference>
<dbReference type="GO" id="GO:0035556">
    <property type="term" value="P:intracellular signal transduction"/>
    <property type="evidence" value="ECO:0000318"/>
    <property type="project" value="GO_Central"/>
</dbReference>
<dbReference type="GO" id="GO:0090090">
    <property type="term" value="P:negative regulation of canonical Wnt signaling pathway"/>
    <property type="evidence" value="ECO:0000318"/>
    <property type="project" value="GO_Central"/>
</dbReference>
<dbReference type="GO" id="GO:0043065">
    <property type="term" value="P:positive regulation of apoptotic process"/>
    <property type="evidence" value="ECO:0000318"/>
    <property type="project" value="GO_Central"/>
</dbReference>
<dbReference type="GO" id="GO:0051262">
    <property type="term" value="P:protein tetramerization"/>
    <property type="evidence" value="ECO:0007669"/>
    <property type="project" value="InterPro"/>
</dbReference>
<dbReference type="GO" id="GO:0043408">
    <property type="term" value="P:regulation of MAPK cascade"/>
    <property type="evidence" value="ECO:0000318"/>
    <property type="project" value="GO_Central"/>
</dbReference>
<dbReference type="CDD" id="cd21887">
    <property type="entry name" value="SARAH_MST1"/>
    <property type="match status" value="1"/>
</dbReference>
<dbReference type="CDD" id="cd06612">
    <property type="entry name" value="STKc_MST1_2"/>
    <property type="match status" value="1"/>
</dbReference>
<dbReference type="FunFam" id="3.30.200.20:FF:000040">
    <property type="entry name" value="Dual specificity mitogen-activated protein kinase kinase"/>
    <property type="match status" value="1"/>
</dbReference>
<dbReference type="FunFam" id="1.10.510.10:FF:000075">
    <property type="entry name" value="Serine/threonine-protein kinase 3"/>
    <property type="match status" value="1"/>
</dbReference>
<dbReference type="FunFam" id="4.10.170.10:FF:000002">
    <property type="entry name" value="serine/threonine-protein kinase 3"/>
    <property type="match status" value="1"/>
</dbReference>
<dbReference type="Gene3D" id="4.10.170.10">
    <property type="entry name" value="p53-like tetramerisation domain"/>
    <property type="match status" value="1"/>
</dbReference>
<dbReference type="Gene3D" id="1.10.510.10">
    <property type="entry name" value="Transferase(Phosphotransferase) domain 1"/>
    <property type="match status" value="1"/>
</dbReference>
<dbReference type="InterPro" id="IPR011009">
    <property type="entry name" value="Kinase-like_dom_sf"/>
</dbReference>
<dbReference type="InterPro" id="IPR024205">
    <property type="entry name" value="Mst1_2_SARAH_domain"/>
</dbReference>
<dbReference type="InterPro" id="IPR036674">
    <property type="entry name" value="p53_tetramer_sf"/>
</dbReference>
<dbReference type="InterPro" id="IPR000719">
    <property type="entry name" value="Prot_kinase_dom"/>
</dbReference>
<dbReference type="InterPro" id="IPR017441">
    <property type="entry name" value="Protein_kinase_ATP_BS"/>
</dbReference>
<dbReference type="InterPro" id="IPR011524">
    <property type="entry name" value="SARAH_dom"/>
</dbReference>
<dbReference type="InterPro" id="IPR050629">
    <property type="entry name" value="STE20/SPS1-PAK"/>
</dbReference>
<dbReference type="PANTHER" id="PTHR48012:SF2">
    <property type="entry name" value="STERILE20-LIKE KINASE, ISOFORM B"/>
    <property type="match status" value="1"/>
</dbReference>
<dbReference type="PANTHER" id="PTHR48012">
    <property type="entry name" value="STERILE20-LIKE KINASE, ISOFORM B-RELATED"/>
    <property type="match status" value="1"/>
</dbReference>
<dbReference type="Pfam" id="PF11629">
    <property type="entry name" value="Mst1_SARAH"/>
    <property type="match status" value="1"/>
</dbReference>
<dbReference type="Pfam" id="PF00069">
    <property type="entry name" value="Pkinase"/>
    <property type="match status" value="1"/>
</dbReference>
<dbReference type="SMART" id="SM00220">
    <property type="entry name" value="S_TKc"/>
    <property type="match status" value="1"/>
</dbReference>
<dbReference type="SUPFAM" id="SSF56112">
    <property type="entry name" value="Protein kinase-like (PK-like)"/>
    <property type="match status" value="1"/>
</dbReference>
<dbReference type="PROSITE" id="PS00107">
    <property type="entry name" value="PROTEIN_KINASE_ATP"/>
    <property type="match status" value="1"/>
</dbReference>
<dbReference type="PROSITE" id="PS50011">
    <property type="entry name" value="PROTEIN_KINASE_DOM"/>
    <property type="match status" value="1"/>
</dbReference>
<dbReference type="PROSITE" id="PS50951">
    <property type="entry name" value="SARAH"/>
    <property type="match status" value="1"/>
</dbReference>
<name>STK4_XENLA</name>
<evidence type="ECO:0000250" key="1"/>
<evidence type="ECO:0000250" key="2">
    <source>
        <dbReference type="UniProtKB" id="Q13043"/>
    </source>
</evidence>
<evidence type="ECO:0000250" key="3">
    <source>
        <dbReference type="UniProtKB" id="Q9JI11"/>
    </source>
</evidence>
<evidence type="ECO:0000255" key="4">
    <source>
        <dbReference type="PROSITE-ProRule" id="PRU00159"/>
    </source>
</evidence>
<evidence type="ECO:0000255" key="5">
    <source>
        <dbReference type="PROSITE-ProRule" id="PRU00310"/>
    </source>
</evidence>
<evidence type="ECO:0000305" key="6"/>
<comment type="function">
    <text evidence="2 3">Stress-activated, pro-apoptotic kinase which, following caspase-cleavage, enters the nucleus and induces chromatin condensation followed by internucleosomal DNA fragmentation. Key component of the Hippo signaling pathway which plays a pivotal role in organ size control and tumor suppression by restricting proliferation and promoting apoptosis. The core of this pathway is composed of a kinase cascade wherein stk3/mst2 and stk4/mst1, in complex with its regulatory protein sav1, phosphorylates and activates lats1/2 in complex with its regulatory protein mob1, which in turn phosphorylates and inactivates yap1 oncoprotein and wwtr1/taz. Phosphorylation of yap1 by lats2 inhibits its translocation into the nucleus to regulate cellular genes important for cell proliferation, cell death, and cell migration. Phosphorylates 'Ser-14' of histone H2B (H2BS14ph) during apoptosis.</text>
</comment>
<comment type="catalytic activity">
    <reaction evidence="2">
        <text>L-seryl-[protein] + ATP = O-phospho-L-seryl-[protein] + ADP + H(+)</text>
        <dbReference type="Rhea" id="RHEA:17989"/>
        <dbReference type="Rhea" id="RHEA-COMP:9863"/>
        <dbReference type="Rhea" id="RHEA-COMP:11604"/>
        <dbReference type="ChEBI" id="CHEBI:15378"/>
        <dbReference type="ChEBI" id="CHEBI:29999"/>
        <dbReference type="ChEBI" id="CHEBI:30616"/>
        <dbReference type="ChEBI" id="CHEBI:83421"/>
        <dbReference type="ChEBI" id="CHEBI:456216"/>
        <dbReference type="EC" id="2.7.11.1"/>
    </reaction>
    <physiologicalReaction direction="left-to-right" evidence="2">
        <dbReference type="Rhea" id="RHEA:17990"/>
    </physiologicalReaction>
</comment>
<comment type="catalytic activity">
    <reaction evidence="2">
        <text>L-threonyl-[protein] + ATP = O-phospho-L-threonyl-[protein] + ADP + H(+)</text>
        <dbReference type="Rhea" id="RHEA:46608"/>
        <dbReference type="Rhea" id="RHEA-COMP:11060"/>
        <dbReference type="Rhea" id="RHEA-COMP:11605"/>
        <dbReference type="ChEBI" id="CHEBI:15378"/>
        <dbReference type="ChEBI" id="CHEBI:30013"/>
        <dbReference type="ChEBI" id="CHEBI:30616"/>
        <dbReference type="ChEBI" id="CHEBI:61977"/>
        <dbReference type="ChEBI" id="CHEBI:456216"/>
        <dbReference type="EC" id="2.7.11.1"/>
    </reaction>
    <physiologicalReaction direction="left-to-right" evidence="2">
        <dbReference type="Rhea" id="RHEA:46609"/>
    </physiologicalReaction>
</comment>
<comment type="cofactor">
    <cofactor evidence="1">
        <name>Mg(2+)</name>
        <dbReference type="ChEBI" id="CHEBI:18420"/>
    </cofactor>
</comment>
<comment type="activity regulation">
    <text evidence="1">The C-terminal non-catalytic region inhibits the kinase activity, the enzyme is activated by caspase-cleavage. Homodimerization and autophosphorylation of Thr-183 is also required for full activation (By similarity).</text>
</comment>
<comment type="subunit">
    <text evidence="1">Homodimer; mediated via the coiled-coil region.</text>
</comment>
<comment type="subcellular location">
    <subcellularLocation>
        <location evidence="1">Cytoplasm</location>
    </subcellularLocation>
    <subcellularLocation>
        <location evidence="1">Nucleus</location>
    </subcellularLocation>
    <text evidence="1">The caspase-cleaved form cycles between nucleus and cytoplasm.</text>
</comment>
<comment type="PTM">
    <text evidence="1">Autophosphorylated on Thr-183.</text>
</comment>
<comment type="PTM">
    <text evidence="1">Proteolytically cleaved by caspase-3 during apoptosis at Asp-326 resulting in a 37 kDa form. Proteolytic cleavage results in kinase activation and nuclear translocation of the truncated form (MST1/N) (By similarity).</text>
</comment>
<comment type="similarity">
    <text evidence="6">Belongs to the protein kinase superfamily. STE Ser/Thr protein kinase family. STE20 subfamily.</text>
</comment>
<sequence length="485" mass="55265">METVQLRNNPRRHLKKLSEESLNKQPEEVFDVLEKLGEGSYGSVYKASHKETSQIVAIKQIPVESDLQEIIKEISIMQQCDSPHVVKYYGSYFKNTDLWIVMEFCGGGSVSDIIRLRKQTLNEDEIATILQSTLKGLEYLHFMRKIHRDIKAGNILLSCEGTAKLADFGVAGQLTDTMAKRNTVIGTPFWMAPEVIQEIGYNCVADIWSLGITAIEMAEGKPPYAEIHPMRAIFMIPSNPPPTFRKPELWSKDFVDFINLCLVKNPELRSSATELLQHPFIKAAKGESILRHLLNAAQDEKLKRTELKQREVEPEEKENVNEDEVDVGTMVQAGGKDLNTMKELGMMSEGADGTMVEKDKLETQMGTMLINDEDEEEETGTMKQCTEPAQQAKPSFLEYFEQKENQFGTPEKTSPTSTDPSEWKIPLNGDYSFLKDWSVAEVQLKLNSLDPMMEREIEEIHHKYQAKRQPILEAIESKKRRQQNF</sequence>
<feature type="chain" id="PRO_0000246629" description="Serine/threonine-protein kinase 4">
    <location>
        <begin position="1"/>
        <end position="485"/>
    </location>
</feature>
<feature type="chain" id="PRO_0000413749" description="Serine/threonine-protein kinase 4 37kDa subunit" evidence="1">
    <location>
        <begin position="1"/>
        <end position="326"/>
    </location>
</feature>
<feature type="chain" id="PRO_0000413750" description="Serine/threonine-protein kinase 4 18kDa subunit" evidence="1">
    <location>
        <begin position="327"/>
        <end position="485"/>
    </location>
</feature>
<feature type="domain" description="Protein kinase" evidence="4">
    <location>
        <begin position="30"/>
        <end position="281"/>
    </location>
</feature>
<feature type="domain" description="SARAH" evidence="5">
    <location>
        <begin position="431"/>
        <end position="478"/>
    </location>
</feature>
<feature type="active site" description="Proton acceptor" evidence="4">
    <location>
        <position position="149"/>
    </location>
</feature>
<feature type="binding site" evidence="4">
    <location>
        <begin position="36"/>
        <end position="44"/>
    </location>
    <ligand>
        <name>ATP</name>
        <dbReference type="ChEBI" id="CHEBI:30616"/>
    </ligand>
</feature>
<feature type="binding site" evidence="4">
    <location>
        <position position="59"/>
    </location>
    <ligand>
        <name>ATP</name>
        <dbReference type="ChEBI" id="CHEBI:30616"/>
    </ligand>
</feature>
<feature type="site" description="Cleavage; by caspase-3" evidence="1">
    <location>
        <begin position="326"/>
        <end position="327"/>
    </location>
</feature>
<feature type="modified residue" description="Phosphothreonine; by autocatalysis" evidence="1">
    <location>
        <position position="183"/>
    </location>
</feature>
<keyword id="KW-0053">Apoptosis</keyword>
<keyword id="KW-0067">ATP-binding</keyword>
<keyword id="KW-0175">Coiled coil</keyword>
<keyword id="KW-0963">Cytoplasm</keyword>
<keyword id="KW-0418">Kinase</keyword>
<keyword id="KW-0460">Magnesium</keyword>
<keyword id="KW-0479">Metal-binding</keyword>
<keyword id="KW-0547">Nucleotide-binding</keyword>
<keyword id="KW-0539">Nucleus</keyword>
<keyword id="KW-0597">Phosphoprotein</keyword>
<keyword id="KW-1185">Reference proteome</keyword>
<keyword id="KW-0723">Serine/threonine-protein kinase</keyword>
<keyword id="KW-0808">Transferase</keyword>
<accession>Q6PA14</accession>
<reference key="1">
    <citation type="submission" date="2003-10" db="EMBL/GenBank/DDBJ databases">
        <authorList>
            <consortium name="NIH - Xenopus Gene Collection (XGC) project"/>
        </authorList>
    </citation>
    <scope>NUCLEOTIDE SEQUENCE [LARGE SCALE MRNA]</scope>
    <source>
        <tissue>Spleen</tissue>
    </source>
</reference>